<gene>
    <name evidence="1" type="primary">rpsH</name>
    <name type="ordered locus">GbCGDNIH1_0568</name>
</gene>
<comment type="function">
    <text evidence="1">One of the primary rRNA binding proteins, it binds directly to 16S rRNA central domain where it helps coordinate assembly of the platform of the 30S subunit.</text>
</comment>
<comment type="subunit">
    <text evidence="1">Part of the 30S ribosomal subunit. Contacts proteins S5 and S12.</text>
</comment>
<comment type="similarity">
    <text evidence="1">Belongs to the universal ribosomal protein uS8 family.</text>
</comment>
<evidence type="ECO:0000255" key="1">
    <source>
        <dbReference type="HAMAP-Rule" id="MF_01302"/>
    </source>
</evidence>
<evidence type="ECO:0000305" key="2"/>
<dbReference type="EMBL" id="CP000394">
    <property type="protein sequence ID" value="ABI61466.1"/>
    <property type="molecule type" value="Genomic_DNA"/>
</dbReference>
<dbReference type="RefSeq" id="WP_011631275.1">
    <property type="nucleotide sequence ID" value="NC_008343.2"/>
</dbReference>
<dbReference type="SMR" id="Q0BUN6"/>
<dbReference type="STRING" id="391165.GbCGDNIH1_0568"/>
<dbReference type="GeneID" id="69744821"/>
<dbReference type="KEGG" id="gbe:GbCGDNIH1_0568"/>
<dbReference type="eggNOG" id="COG0096">
    <property type="taxonomic scope" value="Bacteria"/>
</dbReference>
<dbReference type="HOGENOM" id="CLU_098428_0_0_5"/>
<dbReference type="OrthoDB" id="9802617at2"/>
<dbReference type="Proteomes" id="UP000001963">
    <property type="component" value="Chromosome"/>
</dbReference>
<dbReference type="GO" id="GO:1990904">
    <property type="term" value="C:ribonucleoprotein complex"/>
    <property type="evidence" value="ECO:0007669"/>
    <property type="project" value="UniProtKB-KW"/>
</dbReference>
<dbReference type="GO" id="GO:0005840">
    <property type="term" value="C:ribosome"/>
    <property type="evidence" value="ECO:0007669"/>
    <property type="project" value="UniProtKB-KW"/>
</dbReference>
<dbReference type="GO" id="GO:0019843">
    <property type="term" value="F:rRNA binding"/>
    <property type="evidence" value="ECO:0007669"/>
    <property type="project" value="UniProtKB-UniRule"/>
</dbReference>
<dbReference type="GO" id="GO:0003735">
    <property type="term" value="F:structural constituent of ribosome"/>
    <property type="evidence" value="ECO:0007669"/>
    <property type="project" value="InterPro"/>
</dbReference>
<dbReference type="GO" id="GO:0006412">
    <property type="term" value="P:translation"/>
    <property type="evidence" value="ECO:0007669"/>
    <property type="project" value="UniProtKB-UniRule"/>
</dbReference>
<dbReference type="FunFam" id="3.30.1490.10:FF:000001">
    <property type="entry name" value="30S ribosomal protein S8"/>
    <property type="match status" value="1"/>
</dbReference>
<dbReference type="Gene3D" id="3.30.1370.30">
    <property type="match status" value="1"/>
</dbReference>
<dbReference type="Gene3D" id="3.30.1490.10">
    <property type="match status" value="1"/>
</dbReference>
<dbReference type="HAMAP" id="MF_01302_B">
    <property type="entry name" value="Ribosomal_uS8_B"/>
    <property type="match status" value="1"/>
</dbReference>
<dbReference type="InterPro" id="IPR000630">
    <property type="entry name" value="Ribosomal_uS8"/>
</dbReference>
<dbReference type="InterPro" id="IPR047863">
    <property type="entry name" value="Ribosomal_uS8_CS"/>
</dbReference>
<dbReference type="InterPro" id="IPR035987">
    <property type="entry name" value="Ribosomal_uS8_sf"/>
</dbReference>
<dbReference type="NCBIfam" id="NF001109">
    <property type="entry name" value="PRK00136.1"/>
    <property type="match status" value="1"/>
</dbReference>
<dbReference type="PANTHER" id="PTHR11758">
    <property type="entry name" value="40S RIBOSOMAL PROTEIN S15A"/>
    <property type="match status" value="1"/>
</dbReference>
<dbReference type="Pfam" id="PF00410">
    <property type="entry name" value="Ribosomal_S8"/>
    <property type="match status" value="1"/>
</dbReference>
<dbReference type="SUPFAM" id="SSF56047">
    <property type="entry name" value="Ribosomal protein S8"/>
    <property type="match status" value="1"/>
</dbReference>
<dbReference type="PROSITE" id="PS00053">
    <property type="entry name" value="RIBOSOMAL_S8"/>
    <property type="match status" value="1"/>
</dbReference>
<accession>Q0BUN6</accession>
<protein>
    <recommendedName>
        <fullName evidence="1">Small ribosomal subunit protein uS8</fullName>
    </recommendedName>
    <alternativeName>
        <fullName evidence="2">30S ribosomal protein S8</fullName>
    </alternativeName>
</protein>
<sequence length="132" mass="14648">MQLSDPLGDLLTRIRNAQRSRHATCVSPASKLRANVLEALKREGYIRGYTSEELRPGISQLRVELKYNDGEPVIKEITRVSKPGRRVYSKIKELPRVYAGLGVSILSTPRGVLSDNEARAANVGGEVLCRVF</sequence>
<proteinExistence type="inferred from homology"/>
<organism>
    <name type="scientific">Granulibacter bethesdensis (strain ATCC BAA-1260 / CGDNIH1)</name>
    <dbReference type="NCBI Taxonomy" id="391165"/>
    <lineage>
        <taxon>Bacteria</taxon>
        <taxon>Pseudomonadati</taxon>
        <taxon>Pseudomonadota</taxon>
        <taxon>Alphaproteobacteria</taxon>
        <taxon>Acetobacterales</taxon>
        <taxon>Acetobacteraceae</taxon>
        <taxon>Granulibacter</taxon>
    </lineage>
</organism>
<feature type="chain" id="PRO_0000290846" description="Small ribosomal subunit protein uS8">
    <location>
        <begin position="1"/>
        <end position="132"/>
    </location>
</feature>
<keyword id="KW-1185">Reference proteome</keyword>
<keyword id="KW-0687">Ribonucleoprotein</keyword>
<keyword id="KW-0689">Ribosomal protein</keyword>
<keyword id="KW-0694">RNA-binding</keyword>
<keyword id="KW-0699">rRNA-binding</keyword>
<reference key="1">
    <citation type="journal article" date="2007" name="J. Bacteriol.">
        <title>Genome sequence analysis of the emerging human pathogenic acetic acid bacterium Granulibacter bethesdensis.</title>
        <authorList>
            <person name="Greenberg D.E."/>
            <person name="Porcella S.F."/>
            <person name="Zelazny A.M."/>
            <person name="Virtaneva K."/>
            <person name="Sturdevant D.E."/>
            <person name="Kupko J.J. III"/>
            <person name="Barbian K.D."/>
            <person name="Babar A."/>
            <person name="Dorward D.W."/>
            <person name="Holland S.M."/>
        </authorList>
    </citation>
    <scope>NUCLEOTIDE SEQUENCE [LARGE SCALE GENOMIC DNA]</scope>
    <source>
        <strain>ATCC BAA-1260 / CGDNIH1</strain>
    </source>
</reference>
<name>RS8_GRABC</name>